<protein>
    <recommendedName>
        <fullName>Homeobox protein abdominal-A homolog</fullName>
    </recommendedName>
</protein>
<accession>Q26430</accession>
<name>ABDA_MANSE</name>
<organism>
    <name type="scientific">Manduca sexta</name>
    <name type="common">Tobacco hawkmoth</name>
    <name type="synonym">Tobacco hornworm</name>
    <dbReference type="NCBI Taxonomy" id="7130"/>
    <lineage>
        <taxon>Eukaryota</taxon>
        <taxon>Metazoa</taxon>
        <taxon>Ecdysozoa</taxon>
        <taxon>Arthropoda</taxon>
        <taxon>Hexapoda</taxon>
        <taxon>Insecta</taxon>
        <taxon>Pterygota</taxon>
        <taxon>Neoptera</taxon>
        <taxon>Endopterygota</taxon>
        <taxon>Lepidoptera</taxon>
        <taxon>Glossata</taxon>
        <taxon>Ditrysia</taxon>
        <taxon>Bombycoidea</taxon>
        <taxon>Sphingidae</taxon>
        <taxon>Sphinginae</taxon>
        <taxon>Sphingini</taxon>
        <taxon>Manduca</taxon>
    </lineage>
</organism>
<sequence length="97" mass="12197">SNGCPRRRGRQTYTRFQTLELEKEFHFNHYLTRRRRIEIAHALCLTERQIKIWFQNRRMKLKKELRAVKEINEQARREREEQDRMKQQQQEKQAKLE</sequence>
<comment type="function">
    <text>Sequence-specific transcription factor which is part of a developmental regulatory system that provides cells with specific positional identities on the anterior-posterior axis. Required for segmental identity of the first through tenth abdominal segments.</text>
</comment>
<comment type="subcellular location">
    <subcellularLocation>
        <location evidence="3">Nucleus</location>
    </subcellularLocation>
</comment>
<comment type="similarity">
    <text evidence="3">Belongs to the Antp homeobox family.</text>
</comment>
<dbReference type="EMBL" id="S77989">
    <property type="protein sequence ID" value="AAB21131.2"/>
    <property type="status" value="ALT_SEQ"/>
    <property type="molecule type" value="Genomic_DNA"/>
</dbReference>
<dbReference type="PIR" id="A60127">
    <property type="entry name" value="A60127"/>
</dbReference>
<dbReference type="SMR" id="Q26430"/>
<dbReference type="EnsemblMetazoa" id="XM_030165990.2">
    <property type="protein sequence ID" value="XP_030021850.2"/>
    <property type="gene ID" value="LOC115441263"/>
</dbReference>
<dbReference type="OrthoDB" id="6159439at2759"/>
<dbReference type="GO" id="GO:0005634">
    <property type="term" value="C:nucleus"/>
    <property type="evidence" value="ECO:0007669"/>
    <property type="project" value="UniProtKB-SubCell"/>
</dbReference>
<dbReference type="GO" id="GO:0000981">
    <property type="term" value="F:DNA-binding transcription factor activity, RNA polymerase II-specific"/>
    <property type="evidence" value="ECO:0007669"/>
    <property type="project" value="InterPro"/>
</dbReference>
<dbReference type="GO" id="GO:0000978">
    <property type="term" value="F:RNA polymerase II cis-regulatory region sequence-specific DNA binding"/>
    <property type="evidence" value="ECO:0007669"/>
    <property type="project" value="TreeGrafter"/>
</dbReference>
<dbReference type="GO" id="GO:0009952">
    <property type="term" value="P:anterior/posterior pattern specification"/>
    <property type="evidence" value="ECO:0007669"/>
    <property type="project" value="TreeGrafter"/>
</dbReference>
<dbReference type="GO" id="GO:0000122">
    <property type="term" value="P:negative regulation of transcription by RNA polymerase II"/>
    <property type="evidence" value="ECO:0007669"/>
    <property type="project" value="TreeGrafter"/>
</dbReference>
<dbReference type="CDD" id="cd00086">
    <property type="entry name" value="homeodomain"/>
    <property type="match status" value="1"/>
</dbReference>
<dbReference type="FunFam" id="1.10.10.60:FF:000193">
    <property type="entry name" value="Ultrabithorax, isoform C"/>
    <property type="match status" value="1"/>
</dbReference>
<dbReference type="Gene3D" id="1.10.10.60">
    <property type="entry name" value="Homeodomain-like"/>
    <property type="match status" value="1"/>
</dbReference>
<dbReference type="InterPro" id="IPR022132">
    <property type="entry name" value="Abdominal-A"/>
</dbReference>
<dbReference type="InterPro" id="IPR050296">
    <property type="entry name" value="Antp_homeobox"/>
</dbReference>
<dbReference type="InterPro" id="IPR001356">
    <property type="entry name" value="HD"/>
</dbReference>
<dbReference type="InterPro" id="IPR020479">
    <property type="entry name" value="HD_metazoa"/>
</dbReference>
<dbReference type="InterPro" id="IPR017970">
    <property type="entry name" value="Homeobox_CS"/>
</dbReference>
<dbReference type="InterPro" id="IPR009057">
    <property type="entry name" value="Homeodomain-like_sf"/>
</dbReference>
<dbReference type="PANTHER" id="PTHR45659:SF4">
    <property type="entry name" value="HOMEOBOX PROTEIN ABDOMINAL-A"/>
    <property type="match status" value="1"/>
</dbReference>
<dbReference type="PANTHER" id="PTHR45659">
    <property type="entry name" value="HOMEOBOX PROTEIN HOX"/>
    <property type="match status" value="1"/>
</dbReference>
<dbReference type="Pfam" id="PF12407">
    <property type="entry name" value="Abdominal-A"/>
    <property type="match status" value="1"/>
</dbReference>
<dbReference type="Pfam" id="PF00046">
    <property type="entry name" value="Homeodomain"/>
    <property type="match status" value="1"/>
</dbReference>
<dbReference type="PRINTS" id="PR00024">
    <property type="entry name" value="HOMEOBOX"/>
</dbReference>
<dbReference type="SMART" id="SM00389">
    <property type="entry name" value="HOX"/>
    <property type="match status" value="1"/>
</dbReference>
<dbReference type="SUPFAM" id="SSF46689">
    <property type="entry name" value="Homeodomain-like"/>
    <property type="match status" value="1"/>
</dbReference>
<dbReference type="PROSITE" id="PS00027">
    <property type="entry name" value="HOMEOBOX_1"/>
    <property type="match status" value="1"/>
</dbReference>
<dbReference type="PROSITE" id="PS50071">
    <property type="entry name" value="HOMEOBOX_2"/>
    <property type="match status" value="1"/>
</dbReference>
<proteinExistence type="inferred from homology"/>
<reference key="1">
    <citation type="journal article" date="1991" name="Development">
        <title>Isolation and embryonic expression of an abdominal-A-like gene from the lepidopteran, Manduca sexta.</title>
        <authorList>
            <person name="Nagy L.M."/>
            <person name="Booker R."/>
            <person name="Riddiford L.M."/>
        </authorList>
    </citation>
    <scope>NUCLEOTIDE SEQUENCE [GENOMIC DNA]</scope>
</reference>
<keyword id="KW-0217">Developmental protein</keyword>
<keyword id="KW-0238">DNA-binding</keyword>
<keyword id="KW-0371">Homeobox</keyword>
<keyword id="KW-0539">Nucleus</keyword>
<feature type="chain" id="PRO_0000200252" description="Homeobox protein abdominal-A homolog">
    <location>
        <begin position="1" status="less than"/>
        <end position="97" status="greater than"/>
    </location>
</feature>
<feature type="DNA-binding region" description="Homeobox" evidence="1">
    <location>
        <begin position="6"/>
        <end position="65"/>
    </location>
</feature>
<feature type="region of interest" description="Disordered" evidence="2">
    <location>
        <begin position="73"/>
        <end position="97"/>
    </location>
</feature>
<feature type="compositionally biased region" description="Basic and acidic residues" evidence="2">
    <location>
        <begin position="73"/>
        <end position="86"/>
    </location>
</feature>
<feature type="non-terminal residue">
    <location>
        <position position="1"/>
    </location>
</feature>
<feature type="non-terminal residue">
    <location>
        <position position="97"/>
    </location>
</feature>
<gene>
    <name type="primary">ABD-A</name>
</gene>
<evidence type="ECO:0000255" key="1">
    <source>
        <dbReference type="PROSITE-ProRule" id="PRU00108"/>
    </source>
</evidence>
<evidence type="ECO:0000256" key="2">
    <source>
        <dbReference type="SAM" id="MobiDB-lite"/>
    </source>
</evidence>
<evidence type="ECO:0000305" key="3"/>